<accession>B7LW80</accession>
<reference key="1">
    <citation type="journal article" date="2009" name="PLoS Genet.">
        <title>Organised genome dynamics in the Escherichia coli species results in highly diverse adaptive paths.</title>
        <authorList>
            <person name="Touchon M."/>
            <person name="Hoede C."/>
            <person name="Tenaillon O."/>
            <person name="Barbe V."/>
            <person name="Baeriswyl S."/>
            <person name="Bidet P."/>
            <person name="Bingen E."/>
            <person name="Bonacorsi S."/>
            <person name="Bouchier C."/>
            <person name="Bouvet O."/>
            <person name="Calteau A."/>
            <person name="Chiapello H."/>
            <person name="Clermont O."/>
            <person name="Cruveiller S."/>
            <person name="Danchin A."/>
            <person name="Diard M."/>
            <person name="Dossat C."/>
            <person name="Karoui M.E."/>
            <person name="Frapy E."/>
            <person name="Garry L."/>
            <person name="Ghigo J.M."/>
            <person name="Gilles A.M."/>
            <person name="Johnson J."/>
            <person name="Le Bouguenec C."/>
            <person name="Lescat M."/>
            <person name="Mangenot S."/>
            <person name="Martinez-Jehanne V."/>
            <person name="Matic I."/>
            <person name="Nassif X."/>
            <person name="Oztas S."/>
            <person name="Petit M.A."/>
            <person name="Pichon C."/>
            <person name="Rouy Z."/>
            <person name="Ruf C.S."/>
            <person name="Schneider D."/>
            <person name="Tourret J."/>
            <person name="Vacherie B."/>
            <person name="Vallenet D."/>
            <person name="Medigue C."/>
            <person name="Rocha E.P.C."/>
            <person name="Denamur E."/>
        </authorList>
    </citation>
    <scope>NUCLEOTIDE SEQUENCE [LARGE SCALE GENOMIC DNA]</scope>
    <source>
        <strain>ATCC 35469 / DSM 13698 / BCRC 15582 / CCUG 18766 / IAM 14443 / JCM 21226 / LMG 7866 / NBRC 102419 / NCTC 12128 / CDC 0568-73</strain>
    </source>
</reference>
<protein>
    <recommendedName>
        <fullName evidence="1">Acyl-[acyl-carrier-protein]--UDP-N-acetylglucosamine O-acyltransferase</fullName>
        <shortName evidence="1">UDP-N-acetylglucosamine acyltransferase</shortName>
        <ecNumber evidence="1">2.3.1.129</ecNumber>
    </recommendedName>
</protein>
<keyword id="KW-0012">Acyltransferase</keyword>
<keyword id="KW-0963">Cytoplasm</keyword>
<keyword id="KW-0441">Lipid A biosynthesis</keyword>
<keyword id="KW-0444">Lipid biosynthesis</keyword>
<keyword id="KW-0443">Lipid metabolism</keyword>
<keyword id="KW-0677">Repeat</keyword>
<keyword id="KW-0808">Transferase</keyword>
<proteinExistence type="inferred from homology"/>
<comment type="function">
    <text evidence="1">Involved in the biosynthesis of lipid A, a phosphorylated glycolipid that anchors the lipopolysaccharide to the outer membrane of the cell.</text>
</comment>
<comment type="catalytic activity">
    <reaction evidence="1">
        <text>a (3R)-hydroxyacyl-[ACP] + UDP-N-acetyl-alpha-D-glucosamine = a UDP-3-O-[(3R)-3-hydroxyacyl]-N-acetyl-alpha-D-glucosamine + holo-[ACP]</text>
        <dbReference type="Rhea" id="RHEA:67812"/>
        <dbReference type="Rhea" id="RHEA-COMP:9685"/>
        <dbReference type="Rhea" id="RHEA-COMP:9945"/>
        <dbReference type="ChEBI" id="CHEBI:57705"/>
        <dbReference type="ChEBI" id="CHEBI:64479"/>
        <dbReference type="ChEBI" id="CHEBI:78827"/>
        <dbReference type="ChEBI" id="CHEBI:173225"/>
        <dbReference type="EC" id="2.3.1.129"/>
    </reaction>
</comment>
<comment type="pathway">
    <text evidence="1">Glycolipid biosynthesis; lipid IV(A) biosynthesis; lipid IV(A) from (3R)-3-hydroxytetradecanoyl-[acyl-carrier-protein] and UDP-N-acetyl-alpha-D-glucosamine: step 1/6.</text>
</comment>
<comment type="subunit">
    <text evidence="1">Homotrimer.</text>
</comment>
<comment type="subcellular location">
    <subcellularLocation>
        <location evidence="1">Cytoplasm</location>
    </subcellularLocation>
</comment>
<comment type="similarity">
    <text evidence="1">Belongs to the transferase hexapeptide repeat family. LpxA subfamily.</text>
</comment>
<evidence type="ECO:0000255" key="1">
    <source>
        <dbReference type="HAMAP-Rule" id="MF_00387"/>
    </source>
</evidence>
<gene>
    <name evidence="1" type="primary">lpxA</name>
    <name type="ordered locus">EFER_0204</name>
</gene>
<sequence>MIDKSAFVHPTAIVEEGASIGANAHIGPFCIVGPHVEIGEGTVLKSHVVVNGHTKIGRDNEIYQFASIGEVNQDLKYAGEPTRVEIGDRNRIRESVTIHRGTVQGGGLTKVGSDNLLMINAHIAHDCTVGNRCILANNATLAGHVSVDDFAIIGGMTAVHQFCIIGAHVMVGGCSGVAQDVPPYVIAQGNHATPFGVNIEGLKRRGFSREAITAIRNAYKLIYRSGKTLDEVKPEIAELAETYPEVKAFTDFFARSTRGLIR</sequence>
<dbReference type="EC" id="2.3.1.129" evidence="1"/>
<dbReference type="EMBL" id="CU928158">
    <property type="protein sequence ID" value="CAQ87784.1"/>
    <property type="molecule type" value="Genomic_DNA"/>
</dbReference>
<dbReference type="RefSeq" id="WP_000565966.1">
    <property type="nucleotide sequence ID" value="NC_011740.1"/>
</dbReference>
<dbReference type="SMR" id="B7LW80"/>
<dbReference type="GeneID" id="93777244"/>
<dbReference type="KEGG" id="efe:EFER_0204"/>
<dbReference type="HOGENOM" id="CLU_061249_0_0_6"/>
<dbReference type="OrthoDB" id="9807278at2"/>
<dbReference type="UniPathway" id="UPA00359">
    <property type="reaction ID" value="UER00477"/>
</dbReference>
<dbReference type="Proteomes" id="UP000000745">
    <property type="component" value="Chromosome"/>
</dbReference>
<dbReference type="GO" id="GO:0005737">
    <property type="term" value="C:cytoplasm"/>
    <property type="evidence" value="ECO:0007669"/>
    <property type="project" value="UniProtKB-SubCell"/>
</dbReference>
<dbReference type="GO" id="GO:0016020">
    <property type="term" value="C:membrane"/>
    <property type="evidence" value="ECO:0007669"/>
    <property type="project" value="GOC"/>
</dbReference>
<dbReference type="GO" id="GO:0008780">
    <property type="term" value="F:acyl-[acyl-carrier-protein]-UDP-N-acetylglucosamine O-acyltransferase activity"/>
    <property type="evidence" value="ECO:0007669"/>
    <property type="project" value="UniProtKB-UniRule"/>
</dbReference>
<dbReference type="GO" id="GO:0009245">
    <property type="term" value="P:lipid A biosynthetic process"/>
    <property type="evidence" value="ECO:0007669"/>
    <property type="project" value="UniProtKB-UniRule"/>
</dbReference>
<dbReference type="CDD" id="cd03351">
    <property type="entry name" value="LbH_UDP-GlcNAc_AT"/>
    <property type="match status" value="1"/>
</dbReference>
<dbReference type="FunFam" id="1.20.1180.10:FF:000001">
    <property type="entry name" value="Acyl-[acyl-carrier-protein]--UDP-N-acetylglucosamine O-acyltransferase"/>
    <property type="match status" value="1"/>
</dbReference>
<dbReference type="FunFam" id="2.160.10.10:FF:000003">
    <property type="entry name" value="Acyl-[acyl-carrier-protein]--UDP-N-acetylglucosamine O-acyltransferase"/>
    <property type="match status" value="1"/>
</dbReference>
<dbReference type="Gene3D" id="2.160.10.10">
    <property type="entry name" value="Hexapeptide repeat proteins"/>
    <property type="match status" value="1"/>
</dbReference>
<dbReference type="Gene3D" id="1.20.1180.10">
    <property type="entry name" value="Udp N-acetylglucosamine O-acyltransferase, C-terminal domain"/>
    <property type="match status" value="1"/>
</dbReference>
<dbReference type="HAMAP" id="MF_00387">
    <property type="entry name" value="LpxA"/>
    <property type="match status" value="1"/>
</dbReference>
<dbReference type="InterPro" id="IPR029098">
    <property type="entry name" value="Acetyltransf_C"/>
</dbReference>
<dbReference type="InterPro" id="IPR037157">
    <property type="entry name" value="Acetyltransf_C_sf"/>
</dbReference>
<dbReference type="InterPro" id="IPR001451">
    <property type="entry name" value="Hexapep"/>
</dbReference>
<dbReference type="InterPro" id="IPR018357">
    <property type="entry name" value="Hexapep_transf_CS"/>
</dbReference>
<dbReference type="InterPro" id="IPR010137">
    <property type="entry name" value="Lipid_A_LpxA"/>
</dbReference>
<dbReference type="InterPro" id="IPR011004">
    <property type="entry name" value="Trimer_LpxA-like_sf"/>
</dbReference>
<dbReference type="NCBIfam" id="TIGR01852">
    <property type="entry name" value="lipid_A_lpxA"/>
    <property type="match status" value="1"/>
</dbReference>
<dbReference type="NCBIfam" id="NF003657">
    <property type="entry name" value="PRK05289.1"/>
    <property type="match status" value="1"/>
</dbReference>
<dbReference type="PANTHER" id="PTHR43480">
    <property type="entry name" value="ACYL-[ACYL-CARRIER-PROTEIN]--UDP-N-ACETYLGLUCOSAMINE O-ACYLTRANSFERASE"/>
    <property type="match status" value="1"/>
</dbReference>
<dbReference type="PANTHER" id="PTHR43480:SF1">
    <property type="entry name" value="ACYL-[ACYL-CARRIER-PROTEIN]--UDP-N-ACETYLGLUCOSAMINE O-ACYLTRANSFERASE, MITOCHONDRIAL-RELATED"/>
    <property type="match status" value="1"/>
</dbReference>
<dbReference type="Pfam" id="PF13720">
    <property type="entry name" value="Acetyltransf_11"/>
    <property type="match status" value="1"/>
</dbReference>
<dbReference type="Pfam" id="PF00132">
    <property type="entry name" value="Hexapep"/>
    <property type="match status" value="2"/>
</dbReference>
<dbReference type="PIRSF" id="PIRSF000456">
    <property type="entry name" value="UDP-GlcNAc_acltr"/>
    <property type="match status" value="1"/>
</dbReference>
<dbReference type="SUPFAM" id="SSF51161">
    <property type="entry name" value="Trimeric LpxA-like enzymes"/>
    <property type="match status" value="1"/>
</dbReference>
<dbReference type="PROSITE" id="PS00101">
    <property type="entry name" value="HEXAPEP_TRANSFERASES"/>
    <property type="match status" value="2"/>
</dbReference>
<organism>
    <name type="scientific">Escherichia fergusonii (strain ATCC 35469 / DSM 13698 / CCUG 18766 / IAM 14443 / JCM 21226 / LMG 7866 / NBRC 102419 / NCTC 12128 / CDC 0568-73)</name>
    <dbReference type="NCBI Taxonomy" id="585054"/>
    <lineage>
        <taxon>Bacteria</taxon>
        <taxon>Pseudomonadati</taxon>
        <taxon>Pseudomonadota</taxon>
        <taxon>Gammaproteobacteria</taxon>
        <taxon>Enterobacterales</taxon>
        <taxon>Enterobacteriaceae</taxon>
        <taxon>Escherichia</taxon>
    </lineage>
</organism>
<feature type="chain" id="PRO_1000122709" description="Acyl-[acyl-carrier-protein]--UDP-N-acetylglucosamine O-acyltransferase">
    <location>
        <begin position="1"/>
        <end position="262"/>
    </location>
</feature>
<name>LPXA_ESCF3</name>